<dbReference type="EMBL" id="X64098">
    <property type="protein sequence ID" value="CAA45458.1"/>
    <property type="molecule type" value="Genomic_DNA"/>
</dbReference>
<dbReference type="EMBL" id="AE003852">
    <property type="protein sequence ID" value="AAF93994.1"/>
    <property type="molecule type" value="Genomic_DNA"/>
</dbReference>
<dbReference type="EMBL" id="X74730">
    <property type="protein sequence ID" value="CAA52748.1"/>
    <property type="molecule type" value="Genomic_DNA"/>
</dbReference>
<dbReference type="PIR" id="B82275">
    <property type="entry name" value="B82275"/>
</dbReference>
<dbReference type="PIR" id="PC4162">
    <property type="entry name" value="PC4162"/>
</dbReference>
<dbReference type="PIR" id="S23267">
    <property type="entry name" value="S23267"/>
</dbReference>
<dbReference type="RefSeq" id="NP_230479.1">
    <property type="nucleotide sequence ID" value="NC_002505.1"/>
</dbReference>
<dbReference type="RefSeq" id="WP_000750979.1">
    <property type="nucleotide sequence ID" value="NZ_LT906614.1"/>
</dbReference>
<dbReference type="STRING" id="243277.VC_0831"/>
<dbReference type="DNASU" id="2614498"/>
<dbReference type="EnsemblBacteria" id="AAF93994">
    <property type="protein sequence ID" value="AAF93994"/>
    <property type="gene ID" value="VC_0831"/>
</dbReference>
<dbReference type="KEGG" id="vch:VC_0831"/>
<dbReference type="PATRIC" id="fig|243277.26.peg.792"/>
<dbReference type="eggNOG" id="COG4796">
    <property type="taxonomic scope" value="Bacteria"/>
</dbReference>
<dbReference type="HOGENOM" id="CLU_563760_0_0_6"/>
<dbReference type="Proteomes" id="UP000000584">
    <property type="component" value="Chromosome 1"/>
</dbReference>
<dbReference type="GO" id="GO:0005886">
    <property type="term" value="C:plasma membrane"/>
    <property type="evidence" value="ECO:0007669"/>
    <property type="project" value="UniProtKB-SubCell"/>
</dbReference>
<dbReference type="PROSITE" id="PS51257">
    <property type="entry name" value="PROKAR_LIPOPROTEIN"/>
    <property type="match status" value="1"/>
</dbReference>
<organism>
    <name type="scientific">Vibrio cholerae serotype O1 (strain ATCC 39315 / El Tor Inaba N16961)</name>
    <dbReference type="NCBI Taxonomy" id="243277"/>
    <lineage>
        <taxon>Bacteria</taxon>
        <taxon>Pseudomonadati</taxon>
        <taxon>Pseudomonadota</taxon>
        <taxon>Gammaproteobacteria</taxon>
        <taxon>Vibrionales</taxon>
        <taxon>Vibrionaceae</taxon>
        <taxon>Vibrio</taxon>
    </lineage>
</organism>
<comment type="function">
    <text>Involved in TCP pilus biogenesis.</text>
</comment>
<comment type="subcellular location">
    <subcellularLocation>
        <location>Cell membrane</location>
        <topology>Lipid-anchor</topology>
    </subcellularLocation>
</comment>
<name>TCPC_VIBCH</name>
<protein>
    <recommendedName>
        <fullName>Toxin coregulated pilus biosynthesis outer membrane protein C</fullName>
    </recommendedName>
    <alternativeName>
        <fullName>TCP pilus biosynthesis protein TcpC</fullName>
    </alternativeName>
</protein>
<sequence>MKKTIISTLVIGLVSGCSNTNLLKDNLASEQSVINLSKSSNEAKSRNIEFLSGAYLSERKVPKHDIKFSGKYVEFESKSPIELIDVLDGLSKQYNIQYVFSDELEDENSEENKKSSGSSSAKKIKYSGPLAGFFDYLSSAYNMHFEFGHNNLVKAYHYKNQVFNLQQYFDDNKFSSSMQIGGTSGTSSGLKGTADTAIESNSWEKIDEFLSASLGETGKFTIFEDYSLVTVKARPDKFLLLHTFFDKLINESKMQIAVDYRVVSLSEERLNQLAAKFGIENAGKYSITSDMVDAISLSQVGGGLGASYRSASARLDAVVNELSQEVMHEGHFIGIPNRVMPLNVTTNSKYISSIETTKDTNTDEETRTVKVSDLVTGFSMMVMPKILDDGRIQISSGFSRKQLVSIGTAQGITLPTVDENESMNTVTMNPGEVRLAMLFKDNYIQNSNGVQLLGGGTENKKSARYIAVLVGASSYKTNDLASNRVNIYD</sequence>
<gene>
    <name type="primary">tcpC</name>
    <name type="ordered locus">VC_0831</name>
</gene>
<feature type="signal peptide" evidence="2">
    <location>
        <begin position="1"/>
        <end position="16"/>
    </location>
</feature>
<feature type="chain" id="PRO_0000018196" description="Toxin coregulated pilus biosynthesis outer membrane protein C">
    <location>
        <begin position="17"/>
        <end position="489"/>
    </location>
</feature>
<feature type="transmembrane region" description="Helical" evidence="1">
    <location>
        <begin position="174"/>
        <end position="190"/>
    </location>
</feature>
<feature type="transmembrane region" description="Helical" evidence="1">
    <location>
        <begin position="294"/>
        <end position="308"/>
    </location>
</feature>
<feature type="transmembrane region" description="Helical" evidence="1">
    <location>
        <begin position="402"/>
        <end position="417"/>
    </location>
</feature>
<feature type="transmembrane region" description="Helical" evidence="1">
    <location>
        <begin position="442"/>
        <end position="457"/>
    </location>
</feature>
<feature type="lipid moiety-binding region" description="N-palmitoyl cysteine" evidence="3">
    <location>
        <position position="17"/>
    </location>
</feature>
<feature type="lipid moiety-binding region" description="S-diacylglycerol cysteine" evidence="3">
    <location>
        <position position="17"/>
    </location>
</feature>
<feature type="sequence conflict" description="In Ref. 1; CAA45458." evidence="3" ref="1">
    <original>S</original>
    <variation>A</variation>
    <location>
        <position position="15"/>
    </location>
</feature>
<feature type="sequence conflict" description="In Ref. 1; CAA45458." evidence="3" ref="1">
    <original>S</original>
    <variation>N</variation>
    <location>
        <position position="32"/>
    </location>
</feature>
<feature type="sequence conflict" description="In Ref. 1; CAA45458." evidence="3" ref="1">
    <original>A</original>
    <variation>R</variation>
    <location>
        <position position="43"/>
    </location>
</feature>
<feature type="sequence conflict" description="In Ref. 1; CAA45458." evidence="3" ref="1">
    <original>N</original>
    <variation>K</variation>
    <location>
        <position position="108"/>
    </location>
</feature>
<feature type="sequence conflict" description="In Ref. 1; CAA45458." evidence="3" ref="1">
    <original>E</original>
    <variation>K</variation>
    <location>
        <position position="204"/>
    </location>
</feature>
<keyword id="KW-1003">Cell membrane</keyword>
<keyword id="KW-0449">Lipoprotein</keyword>
<keyword id="KW-0472">Membrane</keyword>
<keyword id="KW-0564">Palmitate</keyword>
<keyword id="KW-1185">Reference proteome</keyword>
<keyword id="KW-0732">Signal</keyword>
<keyword id="KW-0812">Transmembrane</keyword>
<keyword id="KW-1133">Transmembrane helix</keyword>
<accession>P29481</accession>
<accession>Q56667</accession>
<accession>Q9KTR3</accession>
<proteinExistence type="inferred from homology"/>
<reference key="1">
    <citation type="journal article" date="1992" name="FEMS Microbiol. Lett.">
        <title>TCP pilus biosynthesis in Vibrio cholerae O1: gene sequence of tcpC encoding an outer membrane lipoprotein.</title>
        <authorList>
            <person name="Ogierman M.A."/>
            <person name="Manning P.A."/>
        </authorList>
    </citation>
    <scope>NUCLEOTIDE SEQUENCE [GENOMIC DNA]</scope>
    <source>
        <strain>Classical Inaba Z17561 / Serotype O1</strain>
    </source>
</reference>
<reference key="2">
    <citation type="journal article" date="2000" name="Nature">
        <title>DNA sequence of both chromosomes of the cholera pathogen Vibrio cholerae.</title>
        <authorList>
            <person name="Heidelberg J.F."/>
            <person name="Eisen J.A."/>
            <person name="Nelson W.C."/>
            <person name="Clayton R.A."/>
            <person name="Gwinn M.L."/>
            <person name="Dodson R.J."/>
            <person name="Haft D.H."/>
            <person name="Hickey E.K."/>
            <person name="Peterson J.D."/>
            <person name="Umayam L.A."/>
            <person name="Gill S.R."/>
            <person name="Nelson K.E."/>
            <person name="Read T.D."/>
            <person name="Tettelin H."/>
            <person name="Richardson D.L."/>
            <person name="Ermolaeva M.D."/>
            <person name="Vamathevan J.J."/>
            <person name="Bass S."/>
            <person name="Qin H."/>
            <person name="Dragoi I."/>
            <person name="Sellers P."/>
            <person name="McDonald L.A."/>
            <person name="Utterback T.R."/>
            <person name="Fleischmann R.D."/>
            <person name="Nierman W.C."/>
            <person name="White O."/>
            <person name="Salzberg S.L."/>
            <person name="Smith H.O."/>
            <person name="Colwell R.R."/>
            <person name="Mekalanos J.J."/>
            <person name="Venter J.C."/>
            <person name="Fraser C.M."/>
        </authorList>
    </citation>
    <scope>NUCLEOTIDE SEQUENCE [LARGE SCALE GENOMIC DNA]</scope>
    <source>
        <strain>ATCC 39315 / El Tor Inaba N16961</strain>
    </source>
</reference>
<reference key="3">
    <citation type="journal article" date="1996" name="Gene">
        <title>Comparison of the promoter proximal regions of the toxin-co-regulated tcp gene cluster in classical and El Tor strains of Vibrio cholerae O1.</title>
        <authorList>
            <person name="Ogierman M.A."/>
            <person name="Voss E."/>
            <person name="Meaney C."/>
            <person name="Faast R."/>
            <person name="Attridge S.R."/>
            <person name="Manning P.A."/>
        </authorList>
    </citation>
    <scope>NUCLEOTIDE SEQUENCE [GENOMIC DNA] OF 1-46</scope>
    <source>
        <strain>El Tor H1 / Serotype O1</strain>
    </source>
</reference>
<evidence type="ECO:0000255" key="1"/>
<evidence type="ECO:0000255" key="2">
    <source>
        <dbReference type="PROSITE-ProRule" id="PRU00303"/>
    </source>
</evidence>
<evidence type="ECO:0000305" key="3"/>